<name>BR2E_PELLE</name>
<keyword id="KW-0878">Amphibian defense peptide</keyword>
<keyword id="KW-0044">Antibiotic</keyword>
<keyword id="KW-0929">Antimicrobial</keyword>
<keyword id="KW-0204">Cytolysis</keyword>
<keyword id="KW-0903">Direct protein sequencing</keyword>
<keyword id="KW-1015">Disulfide bond</keyword>
<keyword id="KW-0354">Hemolysis</keyword>
<keyword id="KW-0964">Secreted</keyword>
<feature type="peptide" id="PRO_0000043538" description="Brevinin-2Ee" evidence="1">
    <location>
        <begin position="1"/>
        <end position="29"/>
    </location>
</feature>
<feature type="disulfide bond" evidence="1">
    <location>
        <begin position="23"/>
        <end position="29"/>
    </location>
</feature>
<dbReference type="PIR" id="D53578">
    <property type="entry name" value="D53578"/>
</dbReference>
<dbReference type="SMR" id="P40841"/>
<dbReference type="GO" id="GO:0005576">
    <property type="term" value="C:extracellular region"/>
    <property type="evidence" value="ECO:0007669"/>
    <property type="project" value="UniProtKB-SubCell"/>
</dbReference>
<dbReference type="GO" id="GO:0042742">
    <property type="term" value="P:defense response to bacterium"/>
    <property type="evidence" value="ECO:0007669"/>
    <property type="project" value="UniProtKB-KW"/>
</dbReference>
<dbReference type="GO" id="GO:0031640">
    <property type="term" value="P:killing of cells of another organism"/>
    <property type="evidence" value="ECO:0007669"/>
    <property type="project" value="UniProtKB-KW"/>
</dbReference>
<dbReference type="InterPro" id="IPR012521">
    <property type="entry name" value="Antimicrobial_frog_2"/>
</dbReference>
<dbReference type="Pfam" id="PF08023">
    <property type="entry name" value="Antimicrobial_2"/>
    <property type="match status" value="1"/>
</dbReference>
<protein>
    <recommendedName>
        <fullName evidence="2">Brevinin-2Ee</fullName>
    </recommendedName>
</protein>
<sequence length="29" mass="3070">GIFDKLKNFAKGVAQSLLNKASCKLSGQC</sequence>
<organism>
    <name type="scientific">Pelophylax lessonae</name>
    <name type="common">Pool frog</name>
    <name type="synonym">Rana lessonae</name>
    <dbReference type="NCBI Taxonomy" id="45623"/>
    <lineage>
        <taxon>Eukaryota</taxon>
        <taxon>Metazoa</taxon>
        <taxon>Chordata</taxon>
        <taxon>Craniata</taxon>
        <taxon>Vertebrata</taxon>
        <taxon>Euteleostomi</taxon>
        <taxon>Amphibia</taxon>
        <taxon>Batrachia</taxon>
        <taxon>Anura</taxon>
        <taxon>Neobatrachia</taxon>
        <taxon>Ranoidea</taxon>
        <taxon>Ranidae</taxon>
        <taxon>Pelophylax</taxon>
    </lineage>
</organism>
<evidence type="ECO:0000269" key="1">
    <source>
    </source>
</evidence>
<evidence type="ECO:0000303" key="2">
    <source>
    </source>
</evidence>
<evidence type="ECO:0000305" key="3"/>
<evidence type="ECO:0000305" key="4">
    <source>
    </source>
</evidence>
<comment type="function">
    <text>Shows antibacterial activity against representative Gram-negative and Gram-positive bacterial species, and hemolytic activity.</text>
</comment>
<comment type="subcellular location">
    <subcellularLocation>
        <location evidence="1">Secreted</location>
    </subcellularLocation>
</comment>
<comment type="tissue specificity">
    <text evidence="4">Expressed by the skin glands.</text>
</comment>
<comment type="similarity">
    <text evidence="3">Belongs to the frog skin active peptide (FSAP) family. Brevinin subfamily.</text>
</comment>
<reference key="1">
    <citation type="journal article" date="1994" name="J. Biol. Chem.">
        <title>Antimicrobial peptides from skin secretions of Rana esculenta. Molecular cloning of cDNAs encoding esculentin and brevinins and isolation of new active peptides.</title>
        <authorList>
            <person name="Simmaco M."/>
            <person name="Mignogna G."/>
            <person name="Barra D."/>
            <person name="Bossa F."/>
        </authorList>
    </citation>
    <scope>PROTEIN SEQUENCE</scope>
    <scope>DISULFIDE BOND</scope>
    <scope>SUBCELLULAR LOCATION</scope>
    <source>
        <tissue>Skin</tissue>
    </source>
</reference>
<accession>P40841</accession>
<proteinExistence type="evidence at protein level"/>